<keyword id="KW-0472">Membrane</keyword>
<keyword id="KW-0812">Transmembrane</keyword>
<keyword id="KW-1133">Transmembrane helix</keyword>
<gene>
    <name type="ordered locus">YDL152W</name>
    <name type="ORF">D1551</name>
</gene>
<organism>
    <name type="scientific">Saccharomyces cerevisiae (strain ATCC 204508 / S288c)</name>
    <name type="common">Baker's yeast</name>
    <dbReference type="NCBI Taxonomy" id="559292"/>
    <lineage>
        <taxon>Eukaryota</taxon>
        <taxon>Fungi</taxon>
        <taxon>Dikarya</taxon>
        <taxon>Ascomycota</taxon>
        <taxon>Saccharomycotina</taxon>
        <taxon>Saccharomycetes</taxon>
        <taxon>Saccharomycetales</taxon>
        <taxon>Saccharomycetaceae</taxon>
        <taxon>Saccharomyces</taxon>
    </lineage>
</organism>
<name>YD152_YEAST</name>
<proteinExistence type="uncertain"/>
<protein>
    <recommendedName>
        <fullName>Putative uncharacterized protein YDL152W</fullName>
    </recommendedName>
</protein>
<reference key="1">
    <citation type="journal article" date="1996" name="Yeast">
        <title>Analysis of a 23 kb region on the left arm of yeast chromosome IV.</title>
        <authorList>
            <person name="Delaveau T.T.D."/>
            <person name="Blugeon C."/>
            <person name="Jacq C."/>
            <person name="Perea J."/>
        </authorList>
    </citation>
    <scope>NUCLEOTIDE SEQUENCE [GENOMIC DNA]</scope>
</reference>
<reference key="2">
    <citation type="journal article" date="1997" name="Nature">
        <title>The nucleotide sequence of Saccharomyces cerevisiae chromosome IV.</title>
        <authorList>
            <person name="Jacq C."/>
            <person name="Alt-Moerbe J."/>
            <person name="Andre B."/>
            <person name="Arnold W."/>
            <person name="Bahr A."/>
            <person name="Ballesta J.P.G."/>
            <person name="Bargues M."/>
            <person name="Baron L."/>
            <person name="Becker A."/>
            <person name="Biteau N."/>
            <person name="Bloecker H."/>
            <person name="Blugeon C."/>
            <person name="Boskovic J."/>
            <person name="Brandt P."/>
            <person name="Brueckner M."/>
            <person name="Buitrago M.J."/>
            <person name="Coster F."/>
            <person name="Delaveau T."/>
            <person name="del Rey F."/>
            <person name="Dujon B."/>
            <person name="Eide L.G."/>
            <person name="Garcia-Cantalejo J.M."/>
            <person name="Goffeau A."/>
            <person name="Gomez-Peris A."/>
            <person name="Granotier C."/>
            <person name="Hanemann V."/>
            <person name="Hankeln T."/>
            <person name="Hoheisel J.D."/>
            <person name="Jaeger W."/>
            <person name="Jimenez A."/>
            <person name="Jonniaux J.-L."/>
            <person name="Kraemer C."/>
            <person name="Kuester H."/>
            <person name="Laamanen P."/>
            <person name="Legros Y."/>
            <person name="Louis E.J."/>
            <person name="Moeller-Rieker S."/>
            <person name="Monnet A."/>
            <person name="Moro M."/>
            <person name="Mueller-Auer S."/>
            <person name="Nussbaumer B."/>
            <person name="Paricio N."/>
            <person name="Paulin L."/>
            <person name="Perea J."/>
            <person name="Perez-Alonso M."/>
            <person name="Perez-Ortin J.E."/>
            <person name="Pohl T.M."/>
            <person name="Prydz H."/>
            <person name="Purnelle B."/>
            <person name="Rasmussen S.W."/>
            <person name="Remacha M.A."/>
            <person name="Revuelta J.L."/>
            <person name="Rieger M."/>
            <person name="Salom D."/>
            <person name="Saluz H.P."/>
            <person name="Saiz J.E."/>
            <person name="Saren A.-M."/>
            <person name="Schaefer M."/>
            <person name="Scharfe M."/>
            <person name="Schmidt E.R."/>
            <person name="Schneider C."/>
            <person name="Scholler P."/>
            <person name="Schwarz S."/>
            <person name="Soler-Mira A."/>
            <person name="Urrestarazu L.A."/>
            <person name="Verhasselt P."/>
            <person name="Vissers S."/>
            <person name="Voet M."/>
            <person name="Volckaert G."/>
            <person name="Wagner G."/>
            <person name="Wambutt R."/>
            <person name="Wedler E."/>
            <person name="Wedler H."/>
            <person name="Woelfl S."/>
            <person name="Harris D.E."/>
            <person name="Bowman S."/>
            <person name="Brown D."/>
            <person name="Churcher C.M."/>
            <person name="Connor R."/>
            <person name="Dedman K."/>
            <person name="Gentles S."/>
            <person name="Hamlin N."/>
            <person name="Hunt S."/>
            <person name="Jones L."/>
            <person name="McDonald S."/>
            <person name="Murphy L.D."/>
            <person name="Niblett D."/>
            <person name="Odell C."/>
            <person name="Oliver K."/>
            <person name="Rajandream M.A."/>
            <person name="Richards C."/>
            <person name="Shore L."/>
            <person name="Walsh S.V."/>
            <person name="Barrell B.G."/>
            <person name="Dietrich F.S."/>
            <person name="Mulligan J.T."/>
            <person name="Allen E."/>
            <person name="Araujo R."/>
            <person name="Aviles E."/>
            <person name="Berno A."/>
            <person name="Carpenter J."/>
            <person name="Chen E."/>
            <person name="Cherry J.M."/>
            <person name="Chung E."/>
            <person name="Duncan M."/>
            <person name="Hunicke-Smith S."/>
            <person name="Hyman R.W."/>
            <person name="Komp C."/>
            <person name="Lashkari D."/>
            <person name="Lew H."/>
            <person name="Lin D."/>
            <person name="Mosedale D."/>
            <person name="Nakahara K."/>
            <person name="Namath A."/>
            <person name="Oefner P."/>
            <person name="Oh C."/>
            <person name="Petel F.X."/>
            <person name="Roberts D."/>
            <person name="Schramm S."/>
            <person name="Schroeder M."/>
            <person name="Shogren T."/>
            <person name="Shroff N."/>
            <person name="Winant A."/>
            <person name="Yelton M.A."/>
            <person name="Botstein D."/>
            <person name="Davis R.W."/>
            <person name="Johnston M."/>
            <person name="Andrews S."/>
            <person name="Brinkman R."/>
            <person name="Cooper J."/>
            <person name="Ding H."/>
            <person name="Du Z."/>
            <person name="Favello A."/>
            <person name="Fulton L."/>
            <person name="Gattung S."/>
            <person name="Greco T."/>
            <person name="Hallsworth K."/>
            <person name="Hawkins J."/>
            <person name="Hillier L.W."/>
            <person name="Jier M."/>
            <person name="Johnson D."/>
            <person name="Johnston L."/>
            <person name="Kirsten J."/>
            <person name="Kucaba T."/>
            <person name="Langston Y."/>
            <person name="Latreille P."/>
            <person name="Le T."/>
            <person name="Mardis E."/>
            <person name="Menezes S."/>
            <person name="Miller N."/>
            <person name="Nhan M."/>
            <person name="Pauley A."/>
            <person name="Peluso D."/>
            <person name="Rifkin L."/>
            <person name="Riles L."/>
            <person name="Taich A."/>
            <person name="Trevaskis E."/>
            <person name="Vignati D."/>
            <person name="Wilcox L."/>
            <person name="Wohldman P."/>
            <person name="Vaudin M."/>
            <person name="Wilson R."/>
            <person name="Waterston R."/>
            <person name="Albermann K."/>
            <person name="Hani J."/>
            <person name="Heumann K."/>
            <person name="Kleine K."/>
            <person name="Mewes H.-W."/>
            <person name="Zollner A."/>
            <person name="Zaccaria P."/>
        </authorList>
    </citation>
    <scope>NUCLEOTIDE SEQUENCE [LARGE SCALE GENOMIC DNA]</scope>
    <source>
        <strain>ATCC 204508 / S288c</strain>
    </source>
</reference>
<reference key="3">
    <citation type="journal article" date="2014" name="G3 (Bethesda)">
        <title>The reference genome sequence of Saccharomyces cerevisiae: Then and now.</title>
        <authorList>
            <person name="Engel S.R."/>
            <person name="Dietrich F.S."/>
            <person name="Fisk D.G."/>
            <person name="Binkley G."/>
            <person name="Balakrishnan R."/>
            <person name="Costanzo M.C."/>
            <person name="Dwight S.S."/>
            <person name="Hitz B.C."/>
            <person name="Karra K."/>
            <person name="Nash R.S."/>
            <person name="Weng S."/>
            <person name="Wong E.D."/>
            <person name="Lloyd P."/>
            <person name="Skrzypek M.S."/>
            <person name="Miyasato S.R."/>
            <person name="Simison M."/>
            <person name="Cherry J.M."/>
        </authorList>
    </citation>
    <scope>GENOME REANNOTATION</scope>
    <source>
        <strain>ATCC 204508 / S288c</strain>
    </source>
</reference>
<reference key="4">
    <citation type="journal article" date="2007" name="Genome Res.">
        <title>Approaching a complete repository of sequence-verified protein-encoding clones for Saccharomyces cerevisiae.</title>
        <authorList>
            <person name="Hu Y."/>
            <person name="Rolfs A."/>
            <person name="Bhullar B."/>
            <person name="Murthy T.V.S."/>
            <person name="Zhu C."/>
            <person name="Berger M.F."/>
            <person name="Camargo A.A."/>
            <person name="Kelley F."/>
            <person name="McCarron S."/>
            <person name="Jepson D."/>
            <person name="Richardson A."/>
            <person name="Raphael J."/>
            <person name="Moreira D."/>
            <person name="Taycher E."/>
            <person name="Zuo D."/>
            <person name="Mohr S."/>
            <person name="Kane M.F."/>
            <person name="Williamson J."/>
            <person name="Simpson A.J.G."/>
            <person name="Bulyk M.L."/>
            <person name="Harlow E."/>
            <person name="Marsischky G."/>
            <person name="Kolodner R.D."/>
            <person name="LaBaer J."/>
        </authorList>
    </citation>
    <scope>NUCLEOTIDE SEQUENCE [GENOMIC DNA]</scope>
    <source>
        <strain>ATCC 204508 / S288c</strain>
    </source>
</reference>
<comment type="subcellular location">
    <subcellularLocation>
        <location evidence="2">Membrane</location>
        <topology evidence="2">Single-pass membrane protein</topology>
    </subcellularLocation>
</comment>
<comment type="miscellaneous">
    <text evidence="2">Partially overlaps SAS10.</text>
</comment>
<comment type="caution">
    <text evidence="3">Product of a dubious gene prediction unlikely to encode a functional protein. Because of that it is not part of the S.cerevisiae S288c complete/reference proteome set.</text>
</comment>
<dbReference type="EMBL" id="X97751">
    <property type="protein sequence ID" value="CAA66338.1"/>
    <property type="molecule type" value="Genomic_DNA"/>
</dbReference>
<dbReference type="EMBL" id="Z74201">
    <property type="protein sequence ID" value="CAA98727.1"/>
    <property type="molecule type" value="Genomic_DNA"/>
</dbReference>
<dbReference type="EMBL" id="AY693242">
    <property type="protein sequence ID" value="AAT93261.1"/>
    <property type="molecule type" value="Genomic_DNA"/>
</dbReference>
<dbReference type="PIR" id="S67700">
    <property type="entry name" value="S67700"/>
</dbReference>
<dbReference type="IntAct" id="Q12394">
    <property type="interactions" value="8"/>
</dbReference>
<dbReference type="PaxDb" id="4932-YDL152W"/>
<dbReference type="EnsemblFungi" id="YDL152W_mRNA">
    <property type="protein sequence ID" value="YDL152W"/>
    <property type="gene ID" value="YDL152W"/>
</dbReference>
<dbReference type="AGR" id="SGD:S000002311"/>
<dbReference type="SGD" id="S000002311">
    <property type="gene designation" value="YDL152W"/>
</dbReference>
<dbReference type="HOGENOM" id="CLU_2039889_0_0_1"/>
<dbReference type="GO" id="GO:0016020">
    <property type="term" value="C:membrane"/>
    <property type="evidence" value="ECO:0007669"/>
    <property type="project" value="UniProtKB-SubCell"/>
</dbReference>
<accession>Q12394</accession>
<sequence length="121" mass="13682">MAKTSSSSSSSNREWSSSLLLSPKVDCPSKTFSLLEAKSSTSFKPYGLISSPTSEVLVLFEPLRTILFYTPTLICFLFLQNFLYKSISEMSYDEMSFIIEFFFIAEAQFENFSSALQSPIF</sequence>
<feature type="chain" id="PRO_0000299857" description="Putative uncharacterized protein YDL152W">
    <location>
        <begin position="1"/>
        <end position="121"/>
    </location>
</feature>
<feature type="transmembrane region" description="Helical" evidence="1">
    <location>
        <begin position="65"/>
        <end position="84"/>
    </location>
</feature>
<evidence type="ECO:0000255" key="1"/>
<evidence type="ECO:0000305" key="2"/>
<evidence type="ECO:0000305" key="3">
    <source>
    </source>
</evidence>